<accession>Q09607</accession>
<keyword id="KW-1185">Reference proteome</keyword>
<keyword id="KW-0808">Transferase</keyword>
<reference key="1">
    <citation type="journal article" date="1998" name="Science">
        <title>Genome sequence of the nematode C. elegans: a platform for investigating biology.</title>
        <authorList>
            <consortium name="The C. elegans sequencing consortium"/>
        </authorList>
    </citation>
    <scope>NUCLEOTIDE SEQUENCE [LARGE SCALE GENOMIC DNA]</scope>
    <source>
        <strain>Bristol N2</strain>
    </source>
</reference>
<feature type="chain" id="PRO_0000185933" description="Probable glutathione S-transferase gst-36">
    <location>
        <begin position="1"/>
        <end position="210"/>
    </location>
</feature>
<feature type="domain" description="GST N-terminal">
    <location>
        <begin position="2"/>
        <end position="79"/>
    </location>
</feature>
<feature type="domain" description="GST C-terminal">
    <location>
        <begin position="81"/>
        <end position="210"/>
    </location>
</feature>
<feature type="binding site" evidence="2">
    <location>
        <position position="8"/>
    </location>
    <ligand>
        <name>glutathione</name>
        <dbReference type="ChEBI" id="CHEBI:57925"/>
    </ligand>
</feature>
<feature type="binding site" evidence="2">
    <location>
        <position position="39"/>
    </location>
    <ligand>
        <name>glutathione</name>
        <dbReference type="ChEBI" id="CHEBI:57925"/>
    </ligand>
</feature>
<feature type="binding site" evidence="3">
    <location>
        <position position="43"/>
    </location>
    <ligand>
        <name>glutathione</name>
        <dbReference type="ChEBI" id="CHEBI:57925"/>
    </ligand>
</feature>
<feature type="binding site" evidence="2">
    <location>
        <begin position="49"/>
        <end position="51"/>
    </location>
    <ligand>
        <name>glutathione</name>
        <dbReference type="ChEBI" id="CHEBI:57925"/>
    </ligand>
</feature>
<feature type="binding site" evidence="2">
    <location>
        <begin position="63"/>
        <end position="64"/>
    </location>
    <ligand>
        <name>glutathione</name>
        <dbReference type="ChEBI" id="CHEBI:57925"/>
    </ligand>
</feature>
<dbReference type="EC" id="2.5.1.18"/>
<dbReference type="EMBL" id="Z48621">
    <property type="protein sequence ID" value="CAA88541.2"/>
    <property type="molecule type" value="Genomic_DNA"/>
</dbReference>
<dbReference type="PIR" id="T23994">
    <property type="entry name" value="T23994"/>
</dbReference>
<dbReference type="RefSeq" id="NP_509652.2">
    <property type="nucleotide sequence ID" value="NM_077251.4"/>
</dbReference>
<dbReference type="SMR" id="Q09607"/>
<dbReference type="BioGRID" id="52332">
    <property type="interactions" value="8"/>
</dbReference>
<dbReference type="FunCoup" id="Q09607">
    <property type="interactions" value="104"/>
</dbReference>
<dbReference type="IntAct" id="Q09607">
    <property type="interactions" value="1"/>
</dbReference>
<dbReference type="STRING" id="6239.R07B1.4.1"/>
<dbReference type="PaxDb" id="6239-R07B1.4"/>
<dbReference type="PeptideAtlas" id="Q09607"/>
<dbReference type="EnsemblMetazoa" id="R07B1.4.1">
    <property type="protein sequence ID" value="R07B1.4.1"/>
    <property type="gene ID" value="WBGene00001784"/>
</dbReference>
<dbReference type="GeneID" id="187645"/>
<dbReference type="KEGG" id="cel:CELE_R07B1.4"/>
<dbReference type="UCSC" id="R07B1.4">
    <property type="organism name" value="c. elegans"/>
</dbReference>
<dbReference type="AGR" id="WB:WBGene00001784"/>
<dbReference type="CTD" id="187645"/>
<dbReference type="WormBase" id="R07B1.4">
    <property type="protein sequence ID" value="CE30562"/>
    <property type="gene ID" value="WBGene00001784"/>
    <property type="gene designation" value="gst-36"/>
</dbReference>
<dbReference type="eggNOG" id="KOG1695">
    <property type="taxonomic scope" value="Eukaryota"/>
</dbReference>
<dbReference type="HOGENOM" id="CLU_039475_1_0_1"/>
<dbReference type="InParanoid" id="Q09607"/>
<dbReference type="OMA" id="DCARLDM"/>
<dbReference type="OrthoDB" id="414243at2759"/>
<dbReference type="PhylomeDB" id="Q09607"/>
<dbReference type="PRO" id="PR:Q09607"/>
<dbReference type="Proteomes" id="UP000001940">
    <property type="component" value="Chromosome X"/>
</dbReference>
<dbReference type="Bgee" id="WBGene00001784">
    <property type="expression patterns" value="Expressed in larva and 4 other cell types or tissues"/>
</dbReference>
<dbReference type="GO" id="GO:0004602">
    <property type="term" value="F:glutathione peroxidase activity"/>
    <property type="evidence" value="ECO:0000250"/>
    <property type="project" value="WormBase"/>
</dbReference>
<dbReference type="GO" id="GO:0004364">
    <property type="term" value="F:glutathione transferase activity"/>
    <property type="evidence" value="ECO:0000250"/>
    <property type="project" value="WormBase"/>
</dbReference>
<dbReference type="GO" id="GO:0006749">
    <property type="term" value="P:glutathione metabolic process"/>
    <property type="evidence" value="ECO:0000318"/>
    <property type="project" value="GO_Central"/>
</dbReference>
<dbReference type="CDD" id="cd03192">
    <property type="entry name" value="GST_C_Sigma_like"/>
    <property type="match status" value="1"/>
</dbReference>
<dbReference type="CDD" id="cd03039">
    <property type="entry name" value="GST_N_Sigma_like"/>
    <property type="match status" value="1"/>
</dbReference>
<dbReference type="FunFam" id="3.40.30.10:FF:000035">
    <property type="entry name" value="hematopoietic prostaglandin D synthase"/>
    <property type="match status" value="1"/>
</dbReference>
<dbReference type="FunFam" id="1.20.1050.10:FF:000076">
    <property type="entry name" value="Probable glutathione S-transferase gst-36"/>
    <property type="match status" value="1"/>
</dbReference>
<dbReference type="Gene3D" id="1.20.1050.10">
    <property type="match status" value="1"/>
</dbReference>
<dbReference type="Gene3D" id="3.40.30.10">
    <property type="entry name" value="Glutaredoxin"/>
    <property type="match status" value="1"/>
</dbReference>
<dbReference type="InterPro" id="IPR010987">
    <property type="entry name" value="Glutathione-S-Trfase_C-like"/>
</dbReference>
<dbReference type="InterPro" id="IPR036282">
    <property type="entry name" value="Glutathione-S-Trfase_C_sf"/>
</dbReference>
<dbReference type="InterPro" id="IPR040079">
    <property type="entry name" value="Glutathione_S-Trfase"/>
</dbReference>
<dbReference type="InterPro" id="IPR004045">
    <property type="entry name" value="Glutathione_S-Trfase_N"/>
</dbReference>
<dbReference type="InterPro" id="IPR004046">
    <property type="entry name" value="GST_C"/>
</dbReference>
<dbReference type="InterPro" id="IPR050213">
    <property type="entry name" value="GST_superfamily"/>
</dbReference>
<dbReference type="InterPro" id="IPR036249">
    <property type="entry name" value="Thioredoxin-like_sf"/>
</dbReference>
<dbReference type="PANTHER" id="PTHR11571">
    <property type="entry name" value="GLUTATHIONE S-TRANSFERASE"/>
    <property type="match status" value="1"/>
</dbReference>
<dbReference type="PANTHER" id="PTHR11571:SF261">
    <property type="entry name" value="GLUTATHIONE S-TRANSFERASE GST-36-RELATED"/>
    <property type="match status" value="1"/>
</dbReference>
<dbReference type="Pfam" id="PF14497">
    <property type="entry name" value="GST_C_3"/>
    <property type="match status" value="1"/>
</dbReference>
<dbReference type="Pfam" id="PF02798">
    <property type="entry name" value="GST_N"/>
    <property type="match status" value="1"/>
</dbReference>
<dbReference type="SFLD" id="SFLDG01205">
    <property type="entry name" value="AMPS.1"/>
    <property type="match status" value="1"/>
</dbReference>
<dbReference type="SFLD" id="SFLDS00019">
    <property type="entry name" value="Glutathione_Transferase_(cytos"/>
    <property type="match status" value="1"/>
</dbReference>
<dbReference type="SUPFAM" id="SSF47616">
    <property type="entry name" value="GST C-terminal domain-like"/>
    <property type="match status" value="1"/>
</dbReference>
<dbReference type="SUPFAM" id="SSF52833">
    <property type="entry name" value="Thioredoxin-like"/>
    <property type="match status" value="1"/>
</dbReference>
<dbReference type="PROSITE" id="PS50405">
    <property type="entry name" value="GST_CTER"/>
    <property type="match status" value="1"/>
</dbReference>
<dbReference type="PROSITE" id="PS50404">
    <property type="entry name" value="GST_NTER"/>
    <property type="match status" value="1"/>
</dbReference>
<organism>
    <name type="scientific">Caenorhabditis elegans</name>
    <dbReference type="NCBI Taxonomy" id="6239"/>
    <lineage>
        <taxon>Eukaryota</taxon>
        <taxon>Metazoa</taxon>
        <taxon>Ecdysozoa</taxon>
        <taxon>Nematoda</taxon>
        <taxon>Chromadorea</taxon>
        <taxon>Rhabditida</taxon>
        <taxon>Rhabditina</taxon>
        <taxon>Rhabditomorpha</taxon>
        <taxon>Rhabditoidea</taxon>
        <taxon>Rhabditidae</taxon>
        <taxon>Peloderinae</taxon>
        <taxon>Caenorhabditis</taxon>
    </lineage>
</organism>
<proteinExistence type="inferred from homology"/>
<comment type="function">
    <text evidence="1">Conjugation of reduced glutathione to a wide number of exogenous and endogenous hydrophobic electrophiles.</text>
</comment>
<comment type="catalytic activity">
    <reaction>
        <text>RX + glutathione = an S-substituted glutathione + a halide anion + H(+)</text>
        <dbReference type="Rhea" id="RHEA:16437"/>
        <dbReference type="ChEBI" id="CHEBI:15378"/>
        <dbReference type="ChEBI" id="CHEBI:16042"/>
        <dbReference type="ChEBI" id="CHEBI:17792"/>
        <dbReference type="ChEBI" id="CHEBI:57925"/>
        <dbReference type="ChEBI" id="CHEBI:90779"/>
        <dbReference type="EC" id="2.5.1.18"/>
    </reaction>
</comment>
<comment type="similarity">
    <text evidence="4">Belongs to the GST superfamily. Sigma family.</text>
</comment>
<sequence length="210" mass="23876">MPHFKFYYFDVRGRGEAIRLLFHLADEKFDDERFGMEQWGVLKSEMPLGQVPVLEIDGVKISQTTAIARYLGHQFHRAGTNAVDCARLDMIAEVIQEFMSSSGMGKFSRVLLGMIQANKEQFFKENVLPDVEKYAPIVEKFLLENGNNGLLLGDRETWVDVFAAESFSKLIDYGSPDALDAYPHILALINRVFNHPNIKKYVSQRKATPA</sequence>
<gene>
    <name type="primary">gst-36</name>
    <name type="ORF">R07B1.4</name>
</gene>
<name>GST36_CAEEL</name>
<protein>
    <recommendedName>
        <fullName>Probable glutathione S-transferase gst-36</fullName>
        <ecNumber>2.5.1.18</ecNumber>
    </recommendedName>
    <alternativeName>
        <fullName>GST class-sigma</fullName>
    </alternativeName>
</protein>
<evidence type="ECO:0000250" key="1"/>
<evidence type="ECO:0000250" key="2">
    <source>
        <dbReference type="UniProtKB" id="O60760"/>
    </source>
</evidence>
<evidence type="ECO:0000250" key="3">
    <source>
        <dbReference type="UniProtKB" id="P46088"/>
    </source>
</evidence>
<evidence type="ECO:0000305" key="4"/>